<dbReference type="EC" id="1.-.-.-" evidence="3"/>
<dbReference type="EMBL" id="KT581576">
    <property type="protein sequence ID" value="ALD83629.1"/>
    <property type="molecule type" value="Genomic_DNA"/>
</dbReference>
<dbReference type="SMR" id="A0A0M3STX4"/>
<dbReference type="GO" id="GO:0016020">
    <property type="term" value="C:membrane"/>
    <property type="evidence" value="ECO:0007669"/>
    <property type="project" value="UniProtKB-SubCell"/>
</dbReference>
<dbReference type="GO" id="GO:0071949">
    <property type="term" value="F:FAD binding"/>
    <property type="evidence" value="ECO:0007669"/>
    <property type="project" value="InterPro"/>
</dbReference>
<dbReference type="GO" id="GO:0004497">
    <property type="term" value="F:monooxygenase activity"/>
    <property type="evidence" value="ECO:0007669"/>
    <property type="project" value="UniProtKB-KW"/>
</dbReference>
<dbReference type="Gene3D" id="3.50.50.60">
    <property type="entry name" value="FAD/NAD(P)-binding domain"/>
    <property type="match status" value="1"/>
</dbReference>
<dbReference type="InterPro" id="IPR002938">
    <property type="entry name" value="FAD-bd"/>
</dbReference>
<dbReference type="InterPro" id="IPR036188">
    <property type="entry name" value="FAD/NAD-bd_sf"/>
</dbReference>
<dbReference type="InterPro" id="IPR050562">
    <property type="entry name" value="FAD_mOase_fung"/>
</dbReference>
<dbReference type="PANTHER" id="PTHR47356:SF2">
    <property type="entry name" value="FAD-BINDING DOMAIN-CONTAINING PROTEIN-RELATED"/>
    <property type="match status" value="1"/>
</dbReference>
<dbReference type="PANTHER" id="PTHR47356">
    <property type="entry name" value="FAD-DEPENDENT MONOOXYGENASE ASQG-RELATED"/>
    <property type="match status" value="1"/>
</dbReference>
<dbReference type="Pfam" id="PF01494">
    <property type="entry name" value="FAD_binding_3"/>
    <property type="match status" value="1"/>
</dbReference>
<dbReference type="PRINTS" id="PR00420">
    <property type="entry name" value="RNGMNOXGNASE"/>
</dbReference>
<dbReference type="SUPFAM" id="SSF51905">
    <property type="entry name" value="FAD/NAD(P)-binding domain"/>
    <property type="match status" value="1"/>
</dbReference>
<feature type="signal peptide" evidence="2">
    <location>
        <begin position="1"/>
        <end position="21"/>
    </location>
</feature>
<feature type="chain" id="PRO_0000443967" description="FAD-dependent monooxygenase aurC">
    <location>
        <begin position="22"/>
        <end position="484"/>
    </location>
</feature>
<feature type="transmembrane region" description="Helical" evidence="2">
    <location>
        <begin position="451"/>
        <end position="471"/>
    </location>
</feature>
<feature type="active site" evidence="1">
    <location>
        <position position="216"/>
    </location>
</feature>
<feature type="binding site" evidence="1">
    <location>
        <position position="35"/>
    </location>
    <ligand>
        <name>FAD</name>
        <dbReference type="ChEBI" id="CHEBI:57692"/>
    </ligand>
</feature>
<feature type="binding site" evidence="1">
    <location>
        <position position="49"/>
    </location>
    <ligand>
        <name>FAD</name>
        <dbReference type="ChEBI" id="CHEBI:57692"/>
    </ligand>
</feature>
<feature type="binding site" evidence="1">
    <location>
        <position position="108"/>
    </location>
    <ligand>
        <name>FAD</name>
        <dbReference type="ChEBI" id="CHEBI:57692"/>
    </ligand>
</feature>
<feature type="binding site" evidence="1">
    <location>
        <position position="308"/>
    </location>
    <ligand>
        <name>FAD</name>
        <dbReference type="ChEBI" id="CHEBI:57692"/>
    </ligand>
</feature>
<feature type="binding site" evidence="1">
    <location>
        <position position="321"/>
    </location>
    <ligand>
        <name>FAD</name>
        <dbReference type="ChEBI" id="CHEBI:57692"/>
    </ligand>
</feature>
<organism>
    <name type="scientific">Calcarisporium arbuscula</name>
    <name type="common">Dendryphion arbuscula</name>
    <dbReference type="NCBI Taxonomy" id="240499"/>
    <lineage>
        <taxon>Eukaryota</taxon>
        <taxon>Fungi</taxon>
        <taxon>Dikarya</taxon>
        <taxon>Ascomycota</taxon>
        <taxon>Pezizomycotina</taxon>
        <taxon>Sordariomycetes</taxon>
        <taxon>Hypocreomycetidae</taxon>
        <taxon>Hypocreales</taxon>
        <taxon>Hypocreales incertae sedis</taxon>
        <taxon>Calcarisporium</taxon>
    </lineage>
</organism>
<keyword id="KW-0274">FAD</keyword>
<keyword id="KW-0285">Flavoprotein</keyword>
<keyword id="KW-0472">Membrane</keyword>
<keyword id="KW-0503">Monooxygenase</keyword>
<keyword id="KW-0560">Oxidoreductase</keyword>
<keyword id="KW-0732">Signal</keyword>
<keyword id="KW-0812">Transmembrane</keyword>
<keyword id="KW-1133">Transmembrane helix</keyword>
<evidence type="ECO:0000250" key="1">
    <source>
        <dbReference type="UniProtKB" id="B8M9J8"/>
    </source>
</evidence>
<evidence type="ECO:0000255" key="2"/>
<evidence type="ECO:0000269" key="3">
    <source>
    </source>
</evidence>
<evidence type="ECO:0000303" key="4">
    <source>
    </source>
</evidence>
<evidence type="ECO:0000305" key="5"/>
<protein>
    <recommendedName>
        <fullName evidence="4">FAD-dependent monooxygenase aurC</fullName>
        <ecNumber evidence="3">1.-.-.-</ecNumber>
    </recommendedName>
    <alternativeName>
        <fullName evidence="4">Aurovertin biosynthesis cluster protein C</fullName>
    </alternativeName>
</protein>
<sequence>MGAYSFRVIIVGGSITGMTLAHCLDRAGIDYVILEKHKDIFAEPGISIGLMPNGSRILEQLGIYSDVHALFEGIKKIYQYMPDGYCIETDSPVNIVDRFGLPFCVIDRYQFLKVLYSKFEDKSRFHMNKKVTSICHGKSDVSVTTADGETYHGDLVVGADGVHSVVRSEMWRIGNLARPGFVTEREKSELAAEFACVFGVAKAVPGQGRWEHILRYNEDFCFMFFPASGTDVFFNVIYKLNQKYVYPDIPRFTKEEGIEVCESVGDFPVWEDVKFRDIWAQRIAFTCVPLEEHMFKNWHHRRIICVGDSVSKMSPNMGQGGNTAIESAAALTNGLRKLVTSNYPDKPSERQLSNTLETFNRNQFKRLNTVHGDARYVTRLEALDGTLKRVFARYVMGHCGDLLVGNLARIVAGGGVLDFIPLTARSGKDWPPCPWQHSWGISESIDFCKKFAVASLIVLIVVLARALDSPAGLSSGIRSSSWSF</sequence>
<accession>A0A0M3STX4</accession>
<gene>
    <name evidence="4" type="primary">aurC</name>
</gene>
<name>AURC_CALAK</name>
<proteinExistence type="inferred from homology"/>
<comment type="function">
    <text evidence="3">FAD-dependent monooxygenase; part of the gene cluster that mediates the biosynthesis of aurovertins, fungal polyketides that exhibit potent inhibition of adenosine triphosphate synthase (PubMed:26340065). Tha biosynthesis starts with the HR-PKS aurA that selects propionate as the starter unit; synthesizes a hexa-ene chain through the repeated functions of the KR and DH domains in the first six iterations; selectively introduces three alpha-methyl substitutions at C4, C6, and C16 using the S-adensylmethionine-dependent cMET; and shuts off KR and DH in the last three iterations to afford a 1,3,5-triketo portion that can undergo intramolecular cyclization to yield the alpha-pyrone intermediate (PubMed:26340065). AurE may act as a cyclase and enhances the rate of pyrone formation and product release of aurA (PubMed:26340065). The methyltransferase aurB then methylates the C17 hydroxyl group (PubMed:26340065). C17 methylation is required to initiate epoxidation by the downstream monooxygenase aurC (PubMed:26340065). The monooxygenase aurC and the epoxide hydrolase aurD can iteratively transform the terminal triene portion of the methylated precursor into the dioxabicyclo[3.2.1]octane scaffold of aurovertin E. Epoxidation modifications of the precursor occur in two separate steps; bis-epoxidation of the two terminal olefins takes place first, followed by another epoxidation that occurs at C7-C8 after tetrahydrofuran formation (PubMed:26340065). The O-acyltransferase aurG converts aurovertin E to aurovertin A (PubMed:26340065).</text>
</comment>
<comment type="cofactor">
    <cofactor evidence="5">
        <name>FAD</name>
        <dbReference type="ChEBI" id="CHEBI:57692"/>
    </cofactor>
</comment>
<comment type="pathway">
    <text evidence="3">Polyketide biosynthesis.</text>
</comment>
<comment type="subcellular location">
    <subcellularLocation>
        <location evidence="2">Membrane</location>
        <topology evidence="2">Single-pass membrane protein</topology>
    </subcellularLocation>
</comment>
<comment type="similarity">
    <text evidence="5">Belongs to the paxM FAD-dependent monooxygenase family.</text>
</comment>
<reference key="1">
    <citation type="journal article" date="2015" name="J. Am. Chem. Soc.">
        <title>Efficient biosynthesis of fungal polyketides containing the dioxabicyclo-octane ring system.</title>
        <authorList>
            <person name="Mao X.M."/>
            <person name="Zhan Z.J."/>
            <person name="Grayson M.N."/>
            <person name="Tang M.C."/>
            <person name="Xu W."/>
            <person name="Li Y.Q."/>
            <person name="Yin W.B."/>
            <person name="Lin H.C."/>
            <person name="Chooi Y.H."/>
            <person name="Houk K.N."/>
            <person name="Tang Y."/>
        </authorList>
    </citation>
    <scope>NUCLEOTIDE SEQUENCE [GENOMIC DNA]</scope>
    <scope>FUNCTION</scope>
</reference>